<accession>O94341</accession>
<organism>
    <name type="scientific">Schizosaccharomyces pombe (strain 972 / ATCC 24843)</name>
    <name type="common">Fission yeast</name>
    <dbReference type="NCBI Taxonomy" id="284812"/>
    <lineage>
        <taxon>Eukaryota</taxon>
        <taxon>Fungi</taxon>
        <taxon>Dikarya</taxon>
        <taxon>Ascomycota</taxon>
        <taxon>Taphrinomycotina</taxon>
        <taxon>Schizosaccharomycetes</taxon>
        <taxon>Schizosaccharomycetales</taxon>
        <taxon>Schizosaccharomycetaceae</taxon>
        <taxon>Schizosaccharomyces</taxon>
    </lineage>
</organism>
<proteinExistence type="predicted"/>
<feature type="chain" id="PRO_0000116777" description="Uncharacterized protein C1271.08c">
    <location>
        <begin position="1"/>
        <end position="140"/>
    </location>
</feature>
<feature type="transmembrane region" description="Helical" evidence="1">
    <location>
        <begin position="63"/>
        <end position="83"/>
    </location>
</feature>
<feature type="transmembrane region" description="Helical" evidence="1">
    <location>
        <begin position="119"/>
        <end position="139"/>
    </location>
</feature>
<evidence type="ECO:0000255" key="1"/>
<evidence type="ECO:0000305" key="2"/>
<gene>
    <name type="ORF">SPBC1271.08c</name>
</gene>
<name>YHM8_SCHPO</name>
<sequence length="140" mass="16690">MLISRSSMPNLQKRHSDFKTPVYISRSISILNKIFHPCMYIYSRGITNDTYSSDTYELDWYDLGFVHFSKWVELAWCFLTLATWSFMKLLKTLRIVIYICTSDHWTHSLRFYYIELSKILLYLLICGVSLYGAIRIFINL</sequence>
<comment type="subcellular location">
    <subcellularLocation>
        <location evidence="2">Membrane</location>
        <topology evidence="2">Multi-pass membrane protein</topology>
    </subcellularLocation>
</comment>
<keyword id="KW-0472">Membrane</keyword>
<keyword id="KW-1185">Reference proteome</keyword>
<keyword id="KW-0812">Transmembrane</keyword>
<keyword id="KW-1133">Transmembrane helix</keyword>
<reference key="1">
    <citation type="journal article" date="2002" name="Nature">
        <title>The genome sequence of Schizosaccharomyces pombe.</title>
        <authorList>
            <person name="Wood V."/>
            <person name="Gwilliam R."/>
            <person name="Rajandream M.A."/>
            <person name="Lyne M.H."/>
            <person name="Lyne R."/>
            <person name="Stewart A."/>
            <person name="Sgouros J.G."/>
            <person name="Peat N."/>
            <person name="Hayles J."/>
            <person name="Baker S.G."/>
            <person name="Basham D."/>
            <person name="Bowman S."/>
            <person name="Brooks K."/>
            <person name="Brown D."/>
            <person name="Brown S."/>
            <person name="Chillingworth T."/>
            <person name="Churcher C.M."/>
            <person name="Collins M."/>
            <person name="Connor R."/>
            <person name="Cronin A."/>
            <person name="Davis P."/>
            <person name="Feltwell T."/>
            <person name="Fraser A."/>
            <person name="Gentles S."/>
            <person name="Goble A."/>
            <person name="Hamlin N."/>
            <person name="Harris D.E."/>
            <person name="Hidalgo J."/>
            <person name="Hodgson G."/>
            <person name="Holroyd S."/>
            <person name="Hornsby T."/>
            <person name="Howarth S."/>
            <person name="Huckle E.J."/>
            <person name="Hunt S."/>
            <person name="Jagels K."/>
            <person name="James K.D."/>
            <person name="Jones L."/>
            <person name="Jones M."/>
            <person name="Leather S."/>
            <person name="McDonald S."/>
            <person name="McLean J."/>
            <person name="Mooney P."/>
            <person name="Moule S."/>
            <person name="Mungall K.L."/>
            <person name="Murphy L.D."/>
            <person name="Niblett D."/>
            <person name="Odell C."/>
            <person name="Oliver K."/>
            <person name="O'Neil S."/>
            <person name="Pearson D."/>
            <person name="Quail M.A."/>
            <person name="Rabbinowitsch E."/>
            <person name="Rutherford K.M."/>
            <person name="Rutter S."/>
            <person name="Saunders D."/>
            <person name="Seeger K."/>
            <person name="Sharp S."/>
            <person name="Skelton J."/>
            <person name="Simmonds M.N."/>
            <person name="Squares R."/>
            <person name="Squares S."/>
            <person name="Stevens K."/>
            <person name="Taylor K."/>
            <person name="Taylor R.G."/>
            <person name="Tivey A."/>
            <person name="Walsh S.V."/>
            <person name="Warren T."/>
            <person name="Whitehead S."/>
            <person name="Woodward J.R."/>
            <person name="Volckaert G."/>
            <person name="Aert R."/>
            <person name="Robben J."/>
            <person name="Grymonprez B."/>
            <person name="Weltjens I."/>
            <person name="Vanstreels E."/>
            <person name="Rieger M."/>
            <person name="Schaefer M."/>
            <person name="Mueller-Auer S."/>
            <person name="Gabel C."/>
            <person name="Fuchs M."/>
            <person name="Duesterhoeft A."/>
            <person name="Fritzc C."/>
            <person name="Holzer E."/>
            <person name="Moestl D."/>
            <person name="Hilbert H."/>
            <person name="Borzym K."/>
            <person name="Langer I."/>
            <person name="Beck A."/>
            <person name="Lehrach H."/>
            <person name="Reinhardt R."/>
            <person name="Pohl T.M."/>
            <person name="Eger P."/>
            <person name="Zimmermann W."/>
            <person name="Wedler H."/>
            <person name="Wambutt R."/>
            <person name="Purnelle B."/>
            <person name="Goffeau A."/>
            <person name="Cadieu E."/>
            <person name="Dreano S."/>
            <person name="Gloux S."/>
            <person name="Lelaure V."/>
            <person name="Mottier S."/>
            <person name="Galibert F."/>
            <person name="Aves S.J."/>
            <person name="Xiang Z."/>
            <person name="Hunt C."/>
            <person name="Moore K."/>
            <person name="Hurst S.M."/>
            <person name="Lucas M."/>
            <person name="Rochet M."/>
            <person name="Gaillardin C."/>
            <person name="Tallada V.A."/>
            <person name="Garzon A."/>
            <person name="Thode G."/>
            <person name="Daga R.R."/>
            <person name="Cruzado L."/>
            <person name="Jimenez J."/>
            <person name="Sanchez M."/>
            <person name="del Rey F."/>
            <person name="Benito J."/>
            <person name="Dominguez A."/>
            <person name="Revuelta J.L."/>
            <person name="Moreno S."/>
            <person name="Armstrong J."/>
            <person name="Forsburg S.L."/>
            <person name="Cerutti L."/>
            <person name="Lowe T."/>
            <person name="McCombie W.R."/>
            <person name="Paulsen I."/>
            <person name="Potashkin J."/>
            <person name="Shpakovski G.V."/>
            <person name="Ussery D."/>
            <person name="Barrell B.G."/>
            <person name="Nurse P."/>
        </authorList>
    </citation>
    <scope>NUCLEOTIDE SEQUENCE [LARGE SCALE GENOMIC DNA]</scope>
    <source>
        <strain>972 / ATCC 24843</strain>
    </source>
</reference>
<dbReference type="EMBL" id="CU329671">
    <property type="protein sequence ID" value="CAA22198.1"/>
    <property type="molecule type" value="Genomic_DNA"/>
</dbReference>
<dbReference type="PIR" id="T39344">
    <property type="entry name" value="T39344"/>
</dbReference>
<dbReference type="RefSeq" id="NP_595142.1">
    <property type="nucleotide sequence ID" value="NM_001021050.2"/>
</dbReference>
<dbReference type="BioGRID" id="276413">
    <property type="interactions" value="1"/>
</dbReference>
<dbReference type="STRING" id="284812.O94341"/>
<dbReference type="iPTMnet" id="O94341"/>
<dbReference type="PaxDb" id="4896-SPBC1271.08c.1"/>
<dbReference type="EnsemblFungi" id="SPBC1271.08c.1">
    <property type="protein sequence ID" value="SPBC1271.08c.1:pep"/>
    <property type="gene ID" value="SPBC1271.08c"/>
</dbReference>
<dbReference type="KEGG" id="spo:2539866"/>
<dbReference type="PomBase" id="SPBC1271.08c"/>
<dbReference type="VEuPathDB" id="FungiDB:SPBC1271.08c"/>
<dbReference type="HOGENOM" id="CLU_1836310_0_0_1"/>
<dbReference type="InParanoid" id="O94341"/>
<dbReference type="PRO" id="PR:O94341"/>
<dbReference type="Proteomes" id="UP000002485">
    <property type="component" value="Chromosome II"/>
</dbReference>
<dbReference type="GO" id="GO:0005783">
    <property type="term" value="C:endoplasmic reticulum"/>
    <property type="evidence" value="ECO:0007005"/>
    <property type="project" value="PomBase"/>
</dbReference>
<dbReference type="GO" id="GO:0016020">
    <property type="term" value="C:membrane"/>
    <property type="evidence" value="ECO:0007669"/>
    <property type="project" value="UniProtKB-SubCell"/>
</dbReference>
<protein>
    <recommendedName>
        <fullName>Uncharacterized protein C1271.08c</fullName>
    </recommendedName>
</protein>